<protein>
    <recommendedName>
        <fullName evidence="1">Serine--tRNA ligase</fullName>
        <ecNumber evidence="1">6.1.1.11</ecNumber>
    </recommendedName>
    <alternativeName>
        <fullName evidence="1">Seryl-tRNA synthetase</fullName>
        <shortName evidence="1">SerRS</shortName>
    </alternativeName>
    <alternativeName>
        <fullName evidence="1">Seryl-tRNA(Ser/Sec) synthetase</fullName>
    </alternativeName>
</protein>
<sequence>MLDLRYITENTEDLKKVLELRGFKEIGIIDELKSIIQRKREFQKEADILREERNKASKEVGKIKQSGGDITKISASVKLVGEKIKEIESKLEQEENALLNINLGLPNILDPKVPPGKSEHDNIVQYEVGKIPTFQFVPKTHFEIGEALHWIDFEKGVKLSGARAYTYWKDGARLERALMNFMLDVHTKEHDYTEVWVPSMVNDESMMATGQYPKFKDEFYRIDKDELNLIPTAEVPLTNLYRDEIIPEDQLPISVTAHTSCFRREAGSYGKDTRGLVRVHQFQKVELVKFCKPEDSEEEHKKMLSHAENILKKLELPYRVIILCSGDISANSSITYDIEVWMPGLNRYMEISSVSNFRDFQARRGKIRYKSKDGKNQLVHTINGSGLALGRTYAAILENFQNEDGTLRIPEVLKSYF</sequence>
<feature type="chain" id="PRO_0000122071" description="Serine--tRNA ligase">
    <location>
        <begin position="1"/>
        <end position="417"/>
    </location>
</feature>
<feature type="binding site" evidence="1">
    <location>
        <begin position="232"/>
        <end position="234"/>
    </location>
    <ligand>
        <name>L-serine</name>
        <dbReference type="ChEBI" id="CHEBI:33384"/>
    </ligand>
</feature>
<feature type="binding site" evidence="1">
    <location>
        <begin position="263"/>
        <end position="265"/>
    </location>
    <ligand>
        <name>ATP</name>
        <dbReference type="ChEBI" id="CHEBI:30616"/>
    </ligand>
</feature>
<feature type="binding site" evidence="1">
    <location>
        <position position="279"/>
    </location>
    <ligand>
        <name>ATP</name>
        <dbReference type="ChEBI" id="CHEBI:30616"/>
    </ligand>
</feature>
<feature type="binding site" evidence="1">
    <location>
        <position position="286"/>
    </location>
    <ligand>
        <name>L-serine</name>
        <dbReference type="ChEBI" id="CHEBI:33384"/>
    </ligand>
</feature>
<feature type="binding site" evidence="1">
    <location>
        <begin position="350"/>
        <end position="353"/>
    </location>
    <ligand>
        <name>ATP</name>
        <dbReference type="ChEBI" id="CHEBI:30616"/>
    </ligand>
</feature>
<feature type="binding site" evidence="1">
    <location>
        <position position="385"/>
    </location>
    <ligand>
        <name>L-serine</name>
        <dbReference type="ChEBI" id="CHEBI:33384"/>
    </ligand>
</feature>
<accession>Q8EY78</accession>
<evidence type="ECO:0000255" key="1">
    <source>
        <dbReference type="HAMAP-Rule" id="MF_00176"/>
    </source>
</evidence>
<keyword id="KW-0030">Aminoacyl-tRNA synthetase</keyword>
<keyword id="KW-0067">ATP-binding</keyword>
<keyword id="KW-0963">Cytoplasm</keyword>
<keyword id="KW-0436">Ligase</keyword>
<keyword id="KW-0547">Nucleotide-binding</keyword>
<keyword id="KW-0648">Protein biosynthesis</keyword>
<keyword id="KW-1185">Reference proteome</keyword>
<organism>
    <name type="scientific">Leptospira interrogans serogroup Icterohaemorrhagiae serovar Lai (strain 56601)</name>
    <dbReference type="NCBI Taxonomy" id="189518"/>
    <lineage>
        <taxon>Bacteria</taxon>
        <taxon>Pseudomonadati</taxon>
        <taxon>Spirochaetota</taxon>
        <taxon>Spirochaetia</taxon>
        <taxon>Leptospirales</taxon>
        <taxon>Leptospiraceae</taxon>
        <taxon>Leptospira</taxon>
    </lineage>
</organism>
<proteinExistence type="inferred from homology"/>
<dbReference type="EC" id="6.1.1.11" evidence="1"/>
<dbReference type="EMBL" id="AE010300">
    <property type="protein sequence ID" value="AAN51537.1"/>
    <property type="molecule type" value="Genomic_DNA"/>
</dbReference>
<dbReference type="RefSeq" id="NP_714519.1">
    <property type="nucleotide sequence ID" value="NC_004342.2"/>
</dbReference>
<dbReference type="RefSeq" id="WP_000886261.1">
    <property type="nucleotide sequence ID" value="NC_004342.2"/>
</dbReference>
<dbReference type="SMR" id="Q8EY78"/>
<dbReference type="FunCoup" id="Q8EY78">
    <property type="interactions" value="488"/>
</dbReference>
<dbReference type="STRING" id="189518.LA_4339"/>
<dbReference type="PaxDb" id="189518-LA_4339"/>
<dbReference type="EnsemblBacteria" id="AAN51537">
    <property type="protein sequence ID" value="AAN51537"/>
    <property type="gene ID" value="LA_4339"/>
</dbReference>
<dbReference type="GeneID" id="61143340"/>
<dbReference type="KEGG" id="lil:LA_4339"/>
<dbReference type="PATRIC" id="fig|189518.3.peg.4308"/>
<dbReference type="HOGENOM" id="CLU_023797_1_1_12"/>
<dbReference type="InParanoid" id="Q8EY78"/>
<dbReference type="OrthoDB" id="9804647at2"/>
<dbReference type="UniPathway" id="UPA00906">
    <property type="reaction ID" value="UER00895"/>
</dbReference>
<dbReference type="Proteomes" id="UP000001408">
    <property type="component" value="Chromosome I"/>
</dbReference>
<dbReference type="GO" id="GO:0005737">
    <property type="term" value="C:cytoplasm"/>
    <property type="evidence" value="ECO:0007669"/>
    <property type="project" value="UniProtKB-SubCell"/>
</dbReference>
<dbReference type="GO" id="GO:0005524">
    <property type="term" value="F:ATP binding"/>
    <property type="evidence" value="ECO:0007669"/>
    <property type="project" value="UniProtKB-UniRule"/>
</dbReference>
<dbReference type="GO" id="GO:0004828">
    <property type="term" value="F:serine-tRNA ligase activity"/>
    <property type="evidence" value="ECO:0007669"/>
    <property type="project" value="UniProtKB-UniRule"/>
</dbReference>
<dbReference type="GO" id="GO:0016260">
    <property type="term" value="P:selenocysteine biosynthetic process"/>
    <property type="evidence" value="ECO:0007669"/>
    <property type="project" value="UniProtKB-UniRule"/>
</dbReference>
<dbReference type="GO" id="GO:0006434">
    <property type="term" value="P:seryl-tRNA aminoacylation"/>
    <property type="evidence" value="ECO:0007669"/>
    <property type="project" value="UniProtKB-UniRule"/>
</dbReference>
<dbReference type="CDD" id="cd00770">
    <property type="entry name" value="SerRS_core"/>
    <property type="match status" value="1"/>
</dbReference>
<dbReference type="Gene3D" id="3.30.930.10">
    <property type="entry name" value="Bira Bifunctional Protein, Domain 2"/>
    <property type="match status" value="1"/>
</dbReference>
<dbReference type="Gene3D" id="1.10.287.40">
    <property type="entry name" value="Serine-tRNA synthetase, tRNA binding domain"/>
    <property type="match status" value="1"/>
</dbReference>
<dbReference type="HAMAP" id="MF_00176">
    <property type="entry name" value="Ser_tRNA_synth_type1"/>
    <property type="match status" value="1"/>
</dbReference>
<dbReference type="InterPro" id="IPR002314">
    <property type="entry name" value="aa-tRNA-synt_IIb"/>
</dbReference>
<dbReference type="InterPro" id="IPR006195">
    <property type="entry name" value="aa-tRNA-synth_II"/>
</dbReference>
<dbReference type="InterPro" id="IPR045864">
    <property type="entry name" value="aa-tRNA-synth_II/BPL/LPL"/>
</dbReference>
<dbReference type="InterPro" id="IPR002317">
    <property type="entry name" value="Ser-tRNA-ligase_type_1"/>
</dbReference>
<dbReference type="InterPro" id="IPR015866">
    <property type="entry name" value="Ser-tRNA-synth_1_N"/>
</dbReference>
<dbReference type="InterPro" id="IPR042103">
    <property type="entry name" value="SerRS_1_N_sf"/>
</dbReference>
<dbReference type="InterPro" id="IPR033729">
    <property type="entry name" value="SerRS_core"/>
</dbReference>
<dbReference type="InterPro" id="IPR010978">
    <property type="entry name" value="tRNA-bd_arm"/>
</dbReference>
<dbReference type="NCBIfam" id="TIGR00414">
    <property type="entry name" value="serS"/>
    <property type="match status" value="1"/>
</dbReference>
<dbReference type="PANTHER" id="PTHR43697:SF1">
    <property type="entry name" value="SERINE--TRNA LIGASE"/>
    <property type="match status" value="1"/>
</dbReference>
<dbReference type="PANTHER" id="PTHR43697">
    <property type="entry name" value="SERYL-TRNA SYNTHETASE"/>
    <property type="match status" value="1"/>
</dbReference>
<dbReference type="Pfam" id="PF02403">
    <property type="entry name" value="Seryl_tRNA_N"/>
    <property type="match status" value="1"/>
</dbReference>
<dbReference type="Pfam" id="PF00587">
    <property type="entry name" value="tRNA-synt_2b"/>
    <property type="match status" value="1"/>
</dbReference>
<dbReference type="PIRSF" id="PIRSF001529">
    <property type="entry name" value="Ser-tRNA-synth_IIa"/>
    <property type="match status" value="1"/>
</dbReference>
<dbReference type="PRINTS" id="PR00981">
    <property type="entry name" value="TRNASYNTHSER"/>
</dbReference>
<dbReference type="SUPFAM" id="SSF55681">
    <property type="entry name" value="Class II aaRS and biotin synthetases"/>
    <property type="match status" value="1"/>
</dbReference>
<dbReference type="SUPFAM" id="SSF46589">
    <property type="entry name" value="tRNA-binding arm"/>
    <property type="match status" value="1"/>
</dbReference>
<dbReference type="PROSITE" id="PS50862">
    <property type="entry name" value="AA_TRNA_LIGASE_II"/>
    <property type="match status" value="1"/>
</dbReference>
<comment type="function">
    <text evidence="1">Catalyzes the attachment of serine to tRNA(Ser). Is also able to aminoacylate tRNA(Sec) with serine, to form the misacylated tRNA L-seryl-tRNA(Sec), which will be further converted into selenocysteinyl-tRNA(Sec).</text>
</comment>
<comment type="catalytic activity">
    <reaction evidence="1">
        <text>tRNA(Ser) + L-serine + ATP = L-seryl-tRNA(Ser) + AMP + diphosphate + H(+)</text>
        <dbReference type="Rhea" id="RHEA:12292"/>
        <dbReference type="Rhea" id="RHEA-COMP:9669"/>
        <dbReference type="Rhea" id="RHEA-COMP:9703"/>
        <dbReference type="ChEBI" id="CHEBI:15378"/>
        <dbReference type="ChEBI" id="CHEBI:30616"/>
        <dbReference type="ChEBI" id="CHEBI:33019"/>
        <dbReference type="ChEBI" id="CHEBI:33384"/>
        <dbReference type="ChEBI" id="CHEBI:78442"/>
        <dbReference type="ChEBI" id="CHEBI:78533"/>
        <dbReference type="ChEBI" id="CHEBI:456215"/>
        <dbReference type="EC" id="6.1.1.11"/>
    </reaction>
</comment>
<comment type="catalytic activity">
    <reaction evidence="1">
        <text>tRNA(Sec) + L-serine + ATP = L-seryl-tRNA(Sec) + AMP + diphosphate + H(+)</text>
        <dbReference type="Rhea" id="RHEA:42580"/>
        <dbReference type="Rhea" id="RHEA-COMP:9742"/>
        <dbReference type="Rhea" id="RHEA-COMP:10128"/>
        <dbReference type="ChEBI" id="CHEBI:15378"/>
        <dbReference type="ChEBI" id="CHEBI:30616"/>
        <dbReference type="ChEBI" id="CHEBI:33019"/>
        <dbReference type="ChEBI" id="CHEBI:33384"/>
        <dbReference type="ChEBI" id="CHEBI:78442"/>
        <dbReference type="ChEBI" id="CHEBI:78533"/>
        <dbReference type="ChEBI" id="CHEBI:456215"/>
        <dbReference type="EC" id="6.1.1.11"/>
    </reaction>
</comment>
<comment type="pathway">
    <text evidence="1">Aminoacyl-tRNA biosynthesis; selenocysteinyl-tRNA(Sec) biosynthesis; L-seryl-tRNA(Sec) from L-serine and tRNA(Sec): step 1/1.</text>
</comment>
<comment type="subunit">
    <text evidence="1">Homodimer. The tRNA molecule binds across the dimer.</text>
</comment>
<comment type="subcellular location">
    <subcellularLocation>
        <location evidence="1">Cytoplasm</location>
    </subcellularLocation>
</comment>
<comment type="domain">
    <text evidence="1">Consists of two distinct domains, a catalytic core and a N-terminal extension that is involved in tRNA binding.</text>
</comment>
<comment type="similarity">
    <text evidence="1">Belongs to the class-II aminoacyl-tRNA synthetase family. Type-1 seryl-tRNA synthetase subfamily.</text>
</comment>
<reference key="1">
    <citation type="journal article" date="2003" name="Nature">
        <title>Unique physiological and pathogenic features of Leptospira interrogans revealed by whole-genome sequencing.</title>
        <authorList>
            <person name="Ren S.-X."/>
            <person name="Fu G."/>
            <person name="Jiang X.-G."/>
            <person name="Zeng R."/>
            <person name="Miao Y.-G."/>
            <person name="Xu H."/>
            <person name="Zhang Y.-X."/>
            <person name="Xiong H."/>
            <person name="Lu G."/>
            <person name="Lu L.-F."/>
            <person name="Jiang H.-Q."/>
            <person name="Jia J."/>
            <person name="Tu Y.-F."/>
            <person name="Jiang J.-X."/>
            <person name="Gu W.-Y."/>
            <person name="Zhang Y.-Q."/>
            <person name="Cai Z."/>
            <person name="Sheng H.-H."/>
            <person name="Yin H.-F."/>
            <person name="Zhang Y."/>
            <person name="Zhu G.-F."/>
            <person name="Wan M."/>
            <person name="Huang H.-L."/>
            <person name="Qian Z."/>
            <person name="Wang S.-Y."/>
            <person name="Ma W."/>
            <person name="Yao Z.-J."/>
            <person name="Shen Y."/>
            <person name="Qiang B.-Q."/>
            <person name="Xia Q.-C."/>
            <person name="Guo X.-K."/>
            <person name="Danchin A."/>
            <person name="Saint Girons I."/>
            <person name="Somerville R.L."/>
            <person name="Wen Y.-M."/>
            <person name="Shi M.-H."/>
            <person name="Chen Z."/>
            <person name="Xu J.-G."/>
            <person name="Zhao G.-P."/>
        </authorList>
    </citation>
    <scope>NUCLEOTIDE SEQUENCE [LARGE SCALE GENOMIC DNA]</scope>
    <source>
        <strain>56601</strain>
    </source>
</reference>
<gene>
    <name evidence="1" type="primary">serS</name>
    <name type="ordered locus">LA_4339</name>
</gene>
<name>SYS_LEPIN</name>